<proteinExistence type="inferred from homology"/>
<gene>
    <name evidence="1" type="primary">rplC</name>
    <name type="ordered locus">Pden_0759</name>
</gene>
<reference key="1">
    <citation type="submission" date="2006-12" db="EMBL/GenBank/DDBJ databases">
        <title>Complete sequence of chromosome 1 of Paracoccus denitrificans PD1222.</title>
        <authorList>
            <person name="Copeland A."/>
            <person name="Lucas S."/>
            <person name="Lapidus A."/>
            <person name="Barry K."/>
            <person name="Detter J.C."/>
            <person name="Glavina del Rio T."/>
            <person name="Hammon N."/>
            <person name="Israni S."/>
            <person name="Dalin E."/>
            <person name="Tice H."/>
            <person name="Pitluck S."/>
            <person name="Munk A.C."/>
            <person name="Brettin T."/>
            <person name="Bruce D."/>
            <person name="Han C."/>
            <person name="Tapia R."/>
            <person name="Gilna P."/>
            <person name="Schmutz J."/>
            <person name="Larimer F."/>
            <person name="Land M."/>
            <person name="Hauser L."/>
            <person name="Kyrpides N."/>
            <person name="Lykidis A."/>
            <person name="Spiro S."/>
            <person name="Richardson D.J."/>
            <person name="Moir J.W.B."/>
            <person name="Ferguson S.J."/>
            <person name="van Spanning R.J.M."/>
            <person name="Richardson P."/>
        </authorList>
    </citation>
    <scope>NUCLEOTIDE SEQUENCE [LARGE SCALE GENOMIC DNA]</scope>
    <source>
        <strain>Pd 1222</strain>
    </source>
</reference>
<keyword id="KW-0488">Methylation</keyword>
<keyword id="KW-1185">Reference proteome</keyword>
<keyword id="KW-0687">Ribonucleoprotein</keyword>
<keyword id="KW-0689">Ribosomal protein</keyword>
<keyword id="KW-0694">RNA-binding</keyword>
<keyword id="KW-0699">rRNA-binding</keyword>
<evidence type="ECO:0000255" key="1">
    <source>
        <dbReference type="HAMAP-Rule" id="MF_01325"/>
    </source>
</evidence>
<evidence type="ECO:0000256" key="2">
    <source>
        <dbReference type="SAM" id="MobiDB-lite"/>
    </source>
</evidence>
<evidence type="ECO:0000305" key="3"/>
<dbReference type="EMBL" id="CP000489">
    <property type="protein sequence ID" value="ABL68871.1"/>
    <property type="molecule type" value="Genomic_DNA"/>
</dbReference>
<dbReference type="RefSeq" id="WP_011747101.1">
    <property type="nucleotide sequence ID" value="NC_008686.1"/>
</dbReference>
<dbReference type="SMR" id="A1B027"/>
<dbReference type="STRING" id="318586.Pden_0759"/>
<dbReference type="EnsemblBacteria" id="ABL68871">
    <property type="protein sequence ID" value="ABL68871"/>
    <property type="gene ID" value="Pden_0759"/>
</dbReference>
<dbReference type="GeneID" id="93451983"/>
<dbReference type="KEGG" id="pde:Pden_0759"/>
<dbReference type="eggNOG" id="COG0087">
    <property type="taxonomic scope" value="Bacteria"/>
</dbReference>
<dbReference type="HOGENOM" id="CLU_044142_2_0_5"/>
<dbReference type="OrthoDB" id="9806135at2"/>
<dbReference type="Proteomes" id="UP000000361">
    <property type="component" value="Chromosome 1"/>
</dbReference>
<dbReference type="GO" id="GO:0022625">
    <property type="term" value="C:cytosolic large ribosomal subunit"/>
    <property type="evidence" value="ECO:0007669"/>
    <property type="project" value="TreeGrafter"/>
</dbReference>
<dbReference type="GO" id="GO:0019843">
    <property type="term" value="F:rRNA binding"/>
    <property type="evidence" value="ECO:0007669"/>
    <property type="project" value="UniProtKB-UniRule"/>
</dbReference>
<dbReference type="GO" id="GO:0003735">
    <property type="term" value="F:structural constituent of ribosome"/>
    <property type="evidence" value="ECO:0007669"/>
    <property type="project" value="InterPro"/>
</dbReference>
<dbReference type="GO" id="GO:0006412">
    <property type="term" value="P:translation"/>
    <property type="evidence" value="ECO:0007669"/>
    <property type="project" value="UniProtKB-UniRule"/>
</dbReference>
<dbReference type="FunFam" id="2.40.30.10:FF:000004">
    <property type="entry name" value="50S ribosomal protein L3"/>
    <property type="match status" value="1"/>
</dbReference>
<dbReference type="FunFam" id="3.30.160.810:FF:000001">
    <property type="entry name" value="50S ribosomal protein L3"/>
    <property type="match status" value="1"/>
</dbReference>
<dbReference type="Gene3D" id="3.30.160.810">
    <property type="match status" value="1"/>
</dbReference>
<dbReference type="Gene3D" id="2.40.30.10">
    <property type="entry name" value="Translation factors"/>
    <property type="match status" value="1"/>
</dbReference>
<dbReference type="HAMAP" id="MF_01325_B">
    <property type="entry name" value="Ribosomal_uL3_B"/>
    <property type="match status" value="1"/>
</dbReference>
<dbReference type="InterPro" id="IPR000597">
    <property type="entry name" value="Ribosomal_uL3"/>
</dbReference>
<dbReference type="InterPro" id="IPR019927">
    <property type="entry name" value="Ribosomal_uL3_bac/org-type"/>
</dbReference>
<dbReference type="InterPro" id="IPR009000">
    <property type="entry name" value="Transl_B-barrel_sf"/>
</dbReference>
<dbReference type="NCBIfam" id="TIGR03625">
    <property type="entry name" value="L3_bact"/>
    <property type="match status" value="1"/>
</dbReference>
<dbReference type="PANTHER" id="PTHR11229">
    <property type="entry name" value="50S RIBOSOMAL PROTEIN L3"/>
    <property type="match status" value="1"/>
</dbReference>
<dbReference type="PANTHER" id="PTHR11229:SF16">
    <property type="entry name" value="LARGE RIBOSOMAL SUBUNIT PROTEIN UL3C"/>
    <property type="match status" value="1"/>
</dbReference>
<dbReference type="Pfam" id="PF00297">
    <property type="entry name" value="Ribosomal_L3"/>
    <property type="match status" value="1"/>
</dbReference>
<dbReference type="SUPFAM" id="SSF50447">
    <property type="entry name" value="Translation proteins"/>
    <property type="match status" value="1"/>
</dbReference>
<accession>A1B027</accession>
<name>RL3_PARDP</name>
<organism>
    <name type="scientific">Paracoccus denitrificans (strain Pd 1222)</name>
    <dbReference type="NCBI Taxonomy" id="318586"/>
    <lineage>
        <taxon>Bacteria</taxon>
        <taxon>Pseudomonadati</taxon>
        <taxon>Pseudomonadota</taxon>
        <taxon>Alphaproteobacteria</taxon>
        <taxon>Rhodobacterales</taxon>
        <taxon>Paracoccaceae</taxon>
        <taxon>Paracoccus</taxon>
    </lineage>
</organism>
<feature type="chain" id="PRO_1000052101" description="Large ribosomal subunit protein uL3">
    <location>
        <begin position="1"/>
        <end position="245"/>
    </location>
</feature>
<feature type="region of interest" description="Disordered" evidence="2">
    <location>
        <begin position="224"/>
        <end position="245"/>
    </location>
</feature>
<feature type="compositionally biased region" description="Low complexity" evidence="2">
    <location>
        <begin position="230"/>
        <end position="245"/>
    </location>
</feature>
<feature type="modified residue" description="N5-methylglutamine" evidence="1">
    <location>
        <position position="152"/>
    </location>
</feature>
<comment type="function">
    <text evidence="1">One of the primary rRNA binding proteins, it binds directly near the 3'-end of the 23S rRNA, where it nucleates assembly of the 50S subunit.</text>
</comment>
<comment type="subunit">
    <text evidence="1">Part of the 50S ribosomal subunit. Forms a cluster with proteins L14 and L19.</text>
</comment>
<comment type="PTM">
    <text evidence="1">Methylated by PrmB.</text>
</comment>
<comment type="similarity">
    <text evidence="1">Belongs to the universal ribosomal protein uL3 family.</text>
</comment>
<protein>
    <recommendedName>
        <fullName evidence="1">Large ribosomal subunit protein uL3</fullName>
    </recommendedName>
    <alternativeName>
        <fullName evidence="3">50S ribosomal protein L3</fullName>
    </alternativeName>
</protein>
<sequence length="245" mass="25857">MLRTGVIAKKLGMTRLFLEDGRQVPVTVLHVDNVQVIAQRTAEQDGYVALQLGAGEAKAKRTTAALRGHFAKANVAPKRKIAEFRVSPENLVEVGEEIVADHYFEGQYVDIAGTSIGKGFAGAMKRHNFGGLRASHGVSISHRSHGSTGQCQDPGKVFKGKKMAGHLGAVRVTTQNLQVVKTDAERGLIMVKGSVPGSKGGWVTIKDAVKKPLAESTVFPAATRSKAVQAEAAAPAEAAAPEGDN</sequence>